<keyword id="KW-0614">Plasmid</keyword>
<keyword id="KW-1185">Reference proteome</keyword>
<protein>
    <recommendedName>
        <fullName>Uncharacterized protein y4fF</fullName>
    </recommendedName>
</protein>
<feature type="chain" id="PRO_0000200837" description="Uncharacterized protein y4fF">
    <location>
        <begin position="1"/>
        <end position="181"/>
    </location>
</feature>
<accession>P55444</accession>
<organism>
    <name type="scientific">Sinorhizobium fredii (strain NBRC 101917 / NGR234)</name>
    <dbReference type="NCBI Taxonomy" id="394"/>
    <lineage>
        <taxon>Bacteria</taxon>
        <taxon>Pseudomonadati</taxon>
        <taxon>Pseudomonadota</taxon>
        <taxon>Alphaproteobacteria</taxon>
        <taxon>Hyphomicrobiales</taxon>
        <taxon>Rhizobiaceae</taxon>
        <taxon>Sinorhizobium/Ensifer group</taxon>
        <taxon>Sinorhizobium</taxon>
    </lineage>
</organism>
<geneLocation type="plasmid">
    <name>sym pNGR234a</name>
</geneLocation>
<sequence>MFGEQPGLQVDNQSGLFIEGAYVSRSDEGDGGIDIILVGSDPTFAGNDDQTTGEFLRGVSRYAYFTVPGHTPIKNGPFRLANDRDGSLFADRTVIVAAMTLALQSVQYLRHPLADVTMGYDPSAPKNLVAKAQKRGFDAQLELDWKGYPSLTILGADPAARKSSPVAARENDEEIVFGFGR</sequence>
<name>Y4FF_SINFN</name>
<reference key="1">
    <citation type="journal article" date="1997" name="Nature">
        <title>Molecular basis of symbiosis between Rhizobium and legumes.</title>
        <authorList>
            <person name="Freiberg C.A."/>
            <person name="Fellay R."/>
            <person name="Bairoch A."/>
            <person name="Broughton W.J."/>
            <person name="Rosenthal A."/>
            <person name="Perret X."/>
        </authorList>
    </citation>
    <scope>NUCLEOTIDE SEQUENCE [LARGE SCALE GENOMIC DNA]</scope>
    <source>
        <strain>NBRC 101917 / NGR234</strain>
    </source>
</reference>
<reference key="2">
    <citation type="journal article" date="2009" name="Appl. Environ. Microbiol.">
        <title>Rhizobium sp. strain NGR234 possesses a remarkable number of secretion systems.</title>
        <authorList>
            <person name="Schmeisser C."/>
            <person name="Liesegang H."/>
            <person name="Krysciak D."/>
            <person name="Bakkou N."/>
            <person name="Le Quere A."/>
            <person name="Wollherr A."/>
            <person name="Heinemeyer I."/>
            <person name="Morgenstern B."/>
            <person name="Pommerening-Roeser A."/>
            <person name="Flores M."/>
            <person name="Palacios R."/>
            <person name="Brenner S."/>
            <person name="Gottschalk G."/>
            <person name="Schmitz R.A."/>
            <person name="Broughton W.J."/>
            <person name="Perret X."/>
            <person name="Strittmatter A.W."/>
            <person name="Streit W.R."/>
        </authorList>
    </citation>
    <scope>NUCLEOTIDE SEQUENCE [LARGE SCALE GENOMIC DNA]</scope>
    <source>
        <strain>NBRC 101917 / NGR234</strain>
    </source>
</reference>
<proteinExistence type="predicted"/>
<dbReference type="EMBL" id="U00090">
    <property type="protein sequence ID" value="AAB91663.1"/>
    <property type="molecule type" value="Genomic_DNA"/>
</dbReference>
<dbReference type="RefSeq" id="NP_443851.1">
    <property type="nucleotide sequence ID" value="NC_000914.2"/>
</dbReference>
<dbReference type="RefSeq" id="WP_010875388.1">
    <property type="nucleotide sequence ID" value="NC_000914.2"/>
</dbReference>
<dbReference type="KEGG" id="rhi:NGR_a03750"/>
<dbReference type="HOGENOM" id="CLU_1487923_0_0_5"/>
<dbReference type="OrthoDB" id="9983055at2"/>
<dbReference type="Proteomes" id="UP000001054">
    <property type="component" value="Plasmid pNGR234a"/>
</dbReference>
<gene>
    <name type="ordered locus">NGR_a03750</name>
    <name type="ORF">y4fF</name>
</gene>